<evidence type="ECO:0000250" key="1"/>
<evidence type="ECO:0000255" key="2"/>
<evidence type="ECO:0000305" key="3"/>
<feature type="signal peptide" evidence="2">
    <location>
        <begin position="1"/>
        <end position="19"/>
    </location>
</feature>
<feature type="chain" id="PRO_0000006993" description="Beta-defensin 122">
    <location>
        <begin position="20"/>
        <end position="69"/>
    </location>
</feature>
<feature type="disulfide bond" evidence="1">
    <location>
        <begin position="26"/>
        <end position="53"/>
    </location>
</feature>
<feature type="disulfide bond" evidence="1">
    <location>
        <begin position="33"/>
        <end position="47"/>
    </location>
</feature>
<feature type="disulfide bond" evidence="1">
    <location>
        <begin position="37"/>
        <end position="54"/>
    </location>
</feature>
<comment type="function">
    <text evidence="3">Has antibacterial activity.</text>
</comment>
<comment type="subcellular location">
    <subcellularLocation>
        <location evidence="3">Secreted</location>
    </subcellularLocation>
</comment>
<comment type="similarity">
    <text evidence="3">Belongs to the beta-defensin family.</text>
</comment>
<accession>Q5J5Z9</accession>
<dbReference type="EMBL" id="AY499409">
    <property type="protein sequence ID" value="AAS89328.1"/>
    <property type="molecule type" value="mRNA"/>
</dbReference>
<dbReference type="RefSeq" id="NP_001029368.1">
    <property type="nucleotide sequence ID" value="NM_001034196.1"/>
</dbReference>
<dbReference type="SMR" id="Q5J5Z9"/>
<dbReference type="STRING" id="9544.ENSMMUP00000023075"/>
<dbReference type="PaxDb" id="9544-ENSMMUP00000023075"/>
<dbReference type="GeneID" id="619506"/>
<dbReference type="KEGG" id="mcc:619506"/>
<dbReference type="CTD" id="245935"/>
<dbReference type="eggNOG" id="ENOG502TD2F">
    <property type="taxonomic scope" value="Eukaryota"/>
</dbReference>
<dbReference type="HOGENOM" id="CLU_181906_2_0_1"/>
<dbReference type="InParanoid" id="Q5J5Z9"/>
<dbReference type="OrthoDB" id="9532236at2759"/>
<dbReference type="Proteomes" id="UP000006718">
    <property type="component" value="Unassembled WGS sequence"/>
</dbReference>
<dbReference type="GO" id="GO:0005576">
    <property type="term" value="C:extracellular region"/>
    <property type="evidence" value="ECO:0007669"/>
    <property type="project" value="UniProtKB-SubCell"/>
</dbReference>
<dbReference type="GO" id="GO:0042742">
    <property type="term" value="P:defense response to bacterium"/>
    <property type="evidence" value="ECO:0007669"/>
    <property type="project" value="UniProtKB-KW"/>
</dbReference>
<dbReference type="GO" id="GO:0045087">
    <property type="term" value="P:innate immune response"/>
    <property type="evidence" value="ECO:0007669"/>
    <property type="project" value="InterPro"/>
</dbReference>
<dbReference type="Gene3D" id="3.10.360.10">
    <property type="entry name" value="Antimicrobial Peptide, Beta-defensin 2, Chain A"/>
    <property type="match status" value="1"/>
</dbReference>
<dbReference type="InterPro" id="IPR050544">
    <property type="entry name" value="Beta-defensin"/>
</dbReference>
<dbReference type="InterPro" id="IPR025933">
    <property type="entry name" value="Beta_defensin_dom"/>
</dbReference>
<dbReference type="PANTHER" id="PTHR15001:SF5">
    <property type="entry name" value="BETA-DEFENSIN"/>
    <property type="match status" value="1"/>
</dbReference>
<dbReference type="PANTHER" id="PTHR15001">
    <property type="entry name" value="BETA-DEFENSIN 123-RELATED"/>
    <property type="match status" value="1"/>
</dbReference>
<dbReference type="Pfam" id="PF13841">
    <property type="entry name" value="Defensin_beta_2"/>
    <property type="match status" value="1"/>
</dbReference>
<proteinExistence type="inferred from homology"/>
<name>DB122_MACMU</name>
<protein>
    <recommendedName>
        <fullName>Beta-defensin 122</fullName>
    </recommendedName>
    <alternativeName>
        <fullName>Defensin, beta 122</fullName>
    </alternativeName>
</protein>
<sequence>MKPFLVTLAVLLLFFQVTAVGSIEKCWNFRGSCRDECLKNEKVYVFCMSGKLCCLKPKDQPHLPQRTKN</sequence>
<gene>
    <name type="primary">DEFB122</name>
</gene>
<keyword id="KW-0044">Antibiotic</keyword>
<keyword id="KW-0929">Antimicrobial</keyword>
<keyword id="KW-0211">Defensin</keyword>
<keyword id="KW-1015">Disulfide bond</keyword>
<keyword id="KW-1185">Reference proteome</keyword>
<keyword id="KW-0964">Secreted</keyword>
<keyword id="KW-0732">Signal</keyword>
<reference key="1">
    <citation type="submission" date="2003-12" db="EMBL/GenBank/DDBJ databases">
        <title>Differential expression of a primate beta defensin gene cluster specific to male reproductive tract.</title>
        <authorList>
            <person name="Yashwanth R."/>
            <person name="Hamil K.G."/>
            <person name="Yenugu S."/>
            <person name="French F.S."/>
            <person name="Hall S.H."/>
        </authorList>
    </citation>
    <scope>NUCLEOTIDE SEQUENCE [MRNA]</scope>
    <source>
        <tissue>Epididymis</tissue>
    </source>
</reference>
<organism>
    <name type="scientific">Macaca mulatta</name>
    <name type="common">Rhesus macaque</name>
    <dbReference type="NCBI Taxonomy" id="9544"/>
    <lineage>
        <taxon>Eukaryota</taxon>
        <taxon>Metazoa</taxon>
        <taxon>Chordata</taxon>
        <taxon>Craniata</taxon>
        <taxon>Vertebrata</taxon>
        <taxon>Euteleostomi</taxon>
        <taxon>Mammalia</taxon>
        <taxon>Eutheria</taxon>
        <taxon>Euarchontoglires</taxon>
        <taxon>Primates</taxon>
        <taxon>Haplorrhini</taxon>
        <taxon>Catarrhini</taxon>
        <taxon>Cercopithecidae</taxon>
        <taxon>Cercopithecinae</taxon>
        <taxon>Macaca</taxon>
    </lineage>
</organism>